<name>CYSN_SALA4</name>
<reference key="1">
    <citation type="journal article" date="2011" name="J. Bacteriol.">
        <title>Comparative genomics of 28 Salmonella enterica isolates: evidence for CRISPR-mediated adaptive sublineage evolution.</title>
        <authorList>
            <person name="Fricke W.F."/>
            <person name="Mammel M.K."/>
            <person name="McDermott P.F."/>
            <person name="Tartera C."/>
            <person name="White D.G."/>
            <person name="Leclerc J.E."/>
            <person name="Ravel J."/>
            <person name="Cebula T.A."/>
        </authorList>
    </citation>
    <scope>NUCLEOTIDE SEQUENCE [LARGE SCALE GENOMIC DNA]</scope>
    <source>
        <strain>SL483</strain>
    </source>
</reference>
<feature type="chain" id="PRO_1000092151" description="Sulfate adenylyltransferase subunit 1">
    <location>
        <begin position="1"/>
        <end position="479"/>
    </location>
</feature>
<feature type="domain" description="tr-type G">
    <location>
        <begin position="25"/>
        <end position="239"/>
    </location>
</feature>
<feature type="region of interest" description="G1" evidence="1">
    <location>
        <begin position="34"/>
        <end position="41"/>
    </location>
</feature>
<feature type="region of interest" description="G2" evidence="1">
    <location>
        <begin position="92"/>
        <end position="96"/>
    </location>
</feature>
<feature type="region of interest" description="G3" evidence="1">
    <location>
        <begin position="113"/>
        <end position="116"/>
    </location>
</feature>
<feature type="region of interest" description="G4" evidence="1">
    <location>
        <begin position="168"/>
        <end position="171"/>
    </location>
</feature>
<feature type="region of interest" description="G5" evidence="1">
    <location>
        <begin position="206"/>
        <end position="208"/>
    </location>
</feature>
<feature type="binding site" evidence="2">
    <location>
        <begin position="34"/>
        <end position="41"/>
    </location>
    <ligand>
        <name>GTP</name>
        <dbReference type="ChEBI" id="CHEBI:37565"/>
    </ligand>
</feature>
<feature type="binding site" evidence="2">
    <location>
        <begin position="113"/>
        <end position="117"/>
    </location>
    <ligand>
        <name>GTP</name>
        <dbReference type="ChEBI" id="CHEBI:37565"/>
    </ligand>
</feature>
<feature type="binding site" evidence="2">
    <location>
        <begin position="168"/>
        <end position="171"/>
    </location>
    <ligand>
        <name>GTP</name>
        <dbReference type="ChEBI" id="CHEBI:37565"/>
    </ligand>
</feature>
<organism>
    <name type="scientific">Salmonella agona (strain SL483)</name>
    <dbReference type="NCBI Taxonomy" id="454166"/>
    <lineage>
        <taxon>Bacteria</taxon>
        <taxon>Pseudomonadati</taxon>
        <taxon>Pseudomonadota</taxon>
        <taxon>Gammaproteobacteria</taxon>
        <taxon>Enterobacterales</taxon>
        <taxon>Enterobacteriaceae</taxon>
        <taxon>Salmonella</taxon>
    </lineage>
</organism>
<gene>
    <name evidence="2" type="primary">cysN</name>
    <name type="ordered locus">SeAg_B3059</name>
</gene>
<protein>
    <recommendedName>
        <fullName evidence="2">Sulfate adenylyltransferase subunit 1</fullName>
        <ecNumber evidence="2">2.7.7.4</ecNumber>
    </recommendedName>
    <alternativeName>
        <fullName evidence="2">ATP-sulfurylase large subunit</fullName>
    </alternativeName>
    <alternativeName>
        <fullName evidence="2">Sulfate adenylate transferase</fullName>
        <shortName evidence="2">SAT</shortName>
    </alternativeName>
</protein>
<sequence length="479" mass="53152">MNTILAQQIANEGGVEAWMMAQQHKSLLRFLTCGSVDDGKSTLIGRLLHDTLQIYEDQLSSLHNDSKRHGTQGEKLDLALLVDGLQAEREQGITIDVAYRYFSTEKRKFIIADTPGHEQYTRNMATGASTCDLAILLIDARKGVLDQTRRHSFISTLLGIKHLVVAINKMDLVDYREETFARIREDYLTFAEQLPGDLDIRFVPLSALEGDNVAAQSANMRWYSGPTLLEVLETVDIQRAVDRQPMRFPVQYVNRPNLDFRGYAGTLASGSVKVGERIKVLPSGVESSVARIVTFDGDKEEACAGEAITLVLNDDIDISRGDLLLAANETLAPARHAAIDVVWMAEQPLAPGQSYDVKLAGKKTRARIEAIRYQIDINNLTQRDVESLPLNGIGLVEMTFDEPLALDIYQQNPVTGGLIFIDRLSNVTVGAGMVRELDERGATPPVEYSAFELELNALVRRHFPHWDARDLLGDKHGAA</sequence>
<dbReference type="EC" id="2.7.7.4" evidence="2"/>
<dbReference type="EMBL" id="CP001138">
    <property type="protein sequence ID" value="ACH51197.1"/>
    <property type="molecule type" value="Genomic_DNA"/>
</dbReference>
<dbReference type="RefSeq" id="WP_001092269.1">
    <property type="nucleotide sequence ID" value="NC_011149.1"/>
</dbReference>
<dbReference type="SMR" id="B5F415"/>
<dbReference type="KEGG" id="sea:SeAg_B3059"/>
<dbReference type="HOGENOM" id="CLU_007265_5_2_6"/>
<dbReference type="UniPathway" id="UPA00140">
    <property type="reaction ID" value="UER00204"/>
</dbReference>
<dbReference type="Proteomes" id="UP000008819">
    <property type="component" value="Chromosome"/>
</dbReference>
<dbReference type="GO" id="GO:0005524">
    <property type="term" value="F:ATP binding"/>
    <property type="evidence" value="ECO:0007669"/>
    <property type="project" value="UniProtKB-KW"/>
</dbReference>
<dbReference type="GO" id="GO:0005525">
    <property type="term" value="F:GTP binding"/>
    <property type="evidence" value="ECO:0007669"/>
    <property type="project" value="UniProtKB-UniRule"/>
</dbReference>
<dbReference type="GO" id="GO:0003924">
    <property type="term" value="F:GTPase activity"/>
    <property type="evidence" value="ECO:0007669"/>
    <property type="project" value="InterPro"/>
</dbReference>
<dbReference type="GO" id="GO:0004781">
    <property type="term" value="F:sulfate adenylyltransferase (ATP) activity"/>
    <property type="evidence" value="ECO:0007669"/>
    <property type="project" value="UniProtKB-UniRule"/>
</dbReference>
<dbReference type="GO" id="GO:0070814">
    <property type="term" value="P:hydrogen sulfide biosynthetic process"/>
    <property type="evidence" value="ECO:0007669"/>
    <property type="project" value="UniProtKB-UniRule"/>
</dbReference>
<dbReference type="GO" id="GO:0000103">
    <property type="term" value="P:sulfate assimilation"/>
    <property type="evidence" value="ECO:0007669"/>
    <property type="project" value="UniProtKB-UniRule"/>
</dbReference>
<dbReference type="CDD" id="cd04166">
    <property type="entry name" value="CysN_ATPS"/>
    <property type="match status" value="1"/>
</dbReference>
<dbReference type="CDD" id="cd03695">
    <property type="entry name" value="CysN_NodQ_II"/>
    <property type="match status" value="1"/>
</dbReference>
<dbReference type="CDD" id="cd04095">
    <property type="entry name" value="CysN_NoDQ_III"/>
    <property type="match status" value="1"/>
</dbReference>
<dbReference type="FunFam" id="2.40.30.10:FF:000027">
    <property type="entry name" value="Sulfate adenylyltransferase subunit 1"/>
    <property type="match status" value="1"/>
</dbReference>
<dbReference type="FunFam" id="2.40.30.10:FF:000031">
    <property type="entry name" value="Sulfate adenylyltransferase subunit 1"/>
    <property type="match status" value="1"/>
</dbReference>
<dbReference type="FunFam" id="3.40.50.300:FF:000119">
    <property type="entry name" value="Sulfate adenylyltransferase subunit 1"/>
    <property type="match status" value="1"/>
</dbReference>
<dbReference type="Gene3D" id="3.40.50.300">
    <property type="entry name" value="P-loop containing nucleotide triphosphate hydrolases"/>
    <property type="match status" value="1"/>
</dbReference>
<dbReference type="Gene3D" id="2.40.30.10">
    <property type="entry name" value="Translation factors"/>
    <property type="match status" value="2"/>
</dbReference>
<dbReference type="HAMAP" id="MF_00062">
    <property type="entry name" value="Sulf_adenylyltr_sub1"/>
    <property type="match status" value="1"/>
</dbReference>
<dbReference type="InterPro" id="IPR041757">
    <property type="entry name" value="CysN_GTP-bd"/>
</dbReference>
<dbReference type="InterPro" id="IPR044138">
    <property type="entry name" value="CysN_II"/>
</dbReference>
<dbReference type="InterPro" id="IPR044139">
    <property type="entry name" value="CysN_NoDQ_III"/>
</dbReference>
<dbReference type="InterPro" id="IPR031157">
    <property type="entry name" value="G_TR_CS"/>
</dbReference>
<dbReference type="InterPro" id="IPR054696">
    <property type="entry name" value="GTP-eEF1A_C"/>
</dbReference>
<dbReference type="InterPro" id="IPR027417">
    <property type="entry name" value="P-loop_NTPase"/>
</dbReference>
<dbReference type="InterPro" id="IPR005225">
    <property type="entry name" value="Small_GTP-bd"/>
</dbReference>
<dbReference type="InterPro" id="IPR011779">
    <property type="entry name" value="SO4_adenylTrfase_lsu"/>
</dbReference>
<dbReference type="InterPro" id="IPR000795">
    <property type="entry name" value="T_Tr_GTP-bd_dom"/>
</dbReference>
<dbReference type="InterPro" id="IPR050100">
    <property type="entry name" value="TRAFAC_GTPase_members"/>
</dbReference>
<dbReference type="InterPro" id="IPR009000">
    <property type="entry name" value="Transl_B-barrel_sf"/>
</dbReference>
<dbReference type="InterPro" id="IPR009001">
    <property type="entry name" value="Transl_elong_EF1A/Init_IF2_C"/>
</dbReference>
<dbReference type="NCBIfam" id="TIGR02034">
    <property type="entry name" value="CysN"/>
    <property type="match status" value="1"/>
</dbReference>
<dbReference type="NCBIfam" id="NF003478">
    <property type="entry name" value="PRK05124.1"/>
    <property type="match status" value="1"/>
</dbReference>
<dbReference type="NCBIfam" id="TIGR00231">
    <property type="entry name" value="small_GTP"/>
    <property type="match status" value="1"/>
</dbReference>
<dbReference type="PANTHER" id="PTHR23115">
    <property type="entry name" value="TRANSLATION FACTOR"/>
    <property type="match status" value="1"/>
</dbReference>
<dbReference type="Pfam" id="PF22594">
    <property type="entry name" value="GTP-eEF1A_C"/>
    <property type="match status" value="1"/>
</dbReference>
<dbReference type="Pfam" id="PF00009">
    <property type="entry name" value="GTP_EFTU"/>
    <property type="match status" value="1"/>
</dbReference>
<dbReference type="PRINTS" id="PR00315">
    <property type="entry name" value="ELONGATNFCT"/>
</dbReference>
<dbReference type="SUPFAM" id="SSF50465">
    <property type="entry name" value="EF-Tu/eEF-1alpha/eIF2-gamma C-terminal domain"/>
    <property type="match status" value="1"/>
</dbReference>
<dbReference type="SUPFAM" id="SSF52540">
    <property type="entry name" value="P-loop containing nucleoside triphosphate hydrolases"/>
    <property type="match status" value="1"/>
</dbReference>
<dbReference type="SUPFAM" id="SSF50447">
    <property type="entry name" value="Translation proteins"/>
    <property type="match status" value="1"/>
</dbReference>
<dbReference type="PROSITE" id="PS00301">
    <property type="entry name" value="G_TR_1"/>
    <property type="match status" value="1"/>
</dbReference>
<dbReference type="PROSITE" id="PS51722">
    <property type="entry name" value="G_TR_2"/>
    <property type="match status" value="1"/>
</dbReference>
<keyword id="KW-0067">ATP-binding</keyword>
<keyword id="KW-0342">GTP-binding</keyword>
<keyword id="KW-0547">Nucleotide-binding</keyword>
<keyword id="KW-0548">Nucleotidyltransferase</keyword>
<keyword id="KW-0808">Transferase</keyword>
<comment type="function">
    <text evidence="2">With CysD forms the ATP sulfurylase (ATPS) that catalyzes the adenylation of sulfate producing adenosine 5'-phosphosulfate (APS) and diphosphate, the first enzymatic step in sulfur assimilation pathway. APS synthesis involves the formation of a high-energy phosphoric-sulfuric acid anhydride bond driven by GTP hydrolysis by CysN coupled to ATP hydrolysis by CysD.</text>
</comment>
<comment type="catalytic activity">
    <reaction evidence="2">
        <text>sulfate + ATP + H(+) = adenosine 5'-phosphosulfate + diphosphate</text>
        <dbReference type="Rhea" id="RHEA:18133"/>
        <dbReference type="ChEBI" id="CHEBI:15378"/>
        <dbReference type="ChEBI" id="CHEBI:16189"/>
        <dbReference type="ChEBI" id="CHEBI:30616"/>
        <dbReference type="ChEBI" id="CHEBI:33019"/>
        <dbReference type="ChEBI" id="CHEBI:58243"/>
        <dbReference type="EC" id="2.7.7.4"/>
    </reaction>
</comment>
<comment type="pathway">
    <text evidence="2">Sulfur metabolism; hydrogen sulfide biosynthesis; sulfite from sulfate: step 1/3.</text>
</comment>
<comment type="subunit">
    <text evidence="2">Heterodimer composed of CysD, the smaller subunit, and CysN.</text>
</comment>
<comment type="similarity">
    <text evidence="2">Belongs to the TRAFAC class translation factor GTPase superfamily. Classic translation factor GTPase family. CysN/NodQ subfamily.</text>
</comment>
<accession>B5F415</accession>
<proteinExistence type="inferred from homology"/>
<evidence type="ECO:0000250" key="1"/>
<evidence type="ECO:0000255" key="2">
    <source>
        <dbReference type="HAMAP-Rule" id="MF_00062"/>
    </source>
</evidence>